<protein>
    <recommendedName>
        <fullName evidence="1">Large ribosomal subunit protein eL34</fullName>
    </recommendedName>
    <alternativeName>
        <fullName evidence="4">50S ribosomal protein L34e</fullName>
    </alternativeName>
</protein>
<evidence type="ECO:0000255" key="1">
    <source>
        <dbReference type="HAMAP-Rule" id="MF_00349"/>
    </source>
</evidence>
<evidence type="ECO:0000256" key="2">
    <source>
        <dbReference type="SAM" id="MobiDB-lite"/>
    </source>
</evidence>
<evidence type="ECO:0000269" key="3">
    <source>
    </source>
</evidence>
<evidence type="ECO:0000305" key="4"/>
<evidence type="ECO:0007744" key="5">
    <source>
        <dbReference type="PDB" id="6SKF"/>
    </source>
</evidence>
<evidence type="ECO:0007744" key="6">
    <source>
        <dbReference type="PDB" id="6SKG"/>
    </source>
</evidence>
<evidence type="ECO:0007744" key="7">
    <source>
        <dbReference type="PDB" id="6TH6"/>
    </source>
</evidence>
<accession>Q5JJF7</accession>
<feature type="chain" id="PRO_0000131855" description="Large ribosomal subunit protein eL34">
    <location>
        <begin position="1"/>
        <end position="90"/>
    </location>
</feature>
<feature type="region of interest" description="Disordered" evidence="2">
    <location>
        <begin position="41"/>
        <end position="72"/>
    </location>
</feature>
<feature type="binding site" evidence="5 6 7">
    <location>
        <position position="36"/>
    </location>
    <ligand>
        <name>Zn(2+)</name>
        <dbReference type="ChEBI" id="CHEBI:29105"/>
    </ligand>
</feature>
<feature type="binding site" evidence="5 7">
    <location>
        <position position="39"/>
    </location>
    <ligand>
        <name>Zn(2+)</name>
        <dbReference type="ChEBI" id="CHEBI:29105"/>
    </ligand>
</feature>
<feature type="binding site" evidence="5 6">
    <location>
        <position position="72"/>
    </location>
    <ligand>
        <name>Zn(2+)</name>
        <dbReference type="ChEBI" id="CHEBI:29105"/>
    </ligand>
</feature>
<feature type="binding site" evidence="5 6 7">
    <location>
        <position position="75"/>
    </location>
    <ligand>
        <name>Zn(2+)</name>
        <dbReference type="ChEBI" id="CHEBI:29105"/>
    </ligand>
</feature>
<comment type="cofactor">
    <cofactor evidence="5 6 7">
        <name>Zn(2+)</name>
        <dbReference type="ChEBI" id="CHEBI:29105"/>
    </cofactor>
    <text evidence="5 6 7">Binds 1 Zn(2+) per subunit.</text>
</comment>
<comment type="subunit">
    <text evidence="3">Part of the 50S ribosomal subunit.</text>
</comment>
<comment type="similarity">
    <text evidence="1">Belongs to the eukaryotic ribosomal protein eL34 family.</text>
</comment>
<proteinExistence type="evidence at protein level"/>
<sequence length="90" mass="10531">MKPMYRSRSWRRKYVRTPGGRTVIHFERRKPKVAHCAMCGRPLNGVPRGRPSELRKLPKTKKRPERPYPNLCPSCMRKVMKAQVRASITA</sequence>
<name>RL34_THEKO</name>
<keyword id="KW-0002">3D-structure</keyword>
<keyword id="KW-0479">Metal-binding</keyword>
<keyword id="KW-1185">Reference proteome</keyword>
<keyword id="KW-0687">Ribonucleoprotein</keyword>
<keyword id="KW-0689">Ribosomal protein</keyword>
<keyword id="KW-0862">Zinc</keyword>
<gene>
    <name evidence="1" type="primary">rpl34e</name>
    <name type="ordered locus">TK1515</name>
</gene>
<organism>
    <name type="scientific">Thermococcus kodakarensis (strain ATCC BAA-918 / JCM 12380 / KOD1)</name>
    <name type="common">Pyrococcus kodakaraensis (strain KOD1)</name>
    <dbReference type="NCBI Taxonomy" id="69014"/>
    <lineage>
        <taxon>Archaea</taxon>
        <taxon>Methanobacteriati</taxon>
        <taxon>Methanobacteriota</taxon>
        <taxon>Thermococci</taxon>
        <taxon>Thermococcales</taxon>
        <taxon>Thermococcaceae</taxon>
        <taxon>Thermococcus</taxon>
    </lineage>
</organism>
<reference key="1">
    <citation type="journal article" date="2005" name="Genome Res.">
        <title>Complete genome sequence of the hyperthermophilic archaeon Thermococcus kodakaraensis KOD1 and comparison with Pyrococcus genomes.</title>
        <authorList>
            <person name="Fukui T."/>
            <person name="Atomi H."/>
            <person name="Kanai T."/>
            <person name="Matsumi R."/>
            <person name="Fujiwara S."/>
            <person name="Imanaka T."/>
        </authorList>
    </citation>
    <scope>NUCLEOTIDE SEQUENCE [LARGE SCALE GENOMIC DNA]</scope>
    <source>
        <strain>ATCC BAA-918 / JCM 12380 / KOD1</strain>
    </source>
</reference>
<reference evidence="5 6 7" key="2">
    <citation type="journal article" date="2020" name="Nature">
        <title>Dynamic RNA acetylation revealed by quantitative cross-evolutionary mapping.</title>
        <authorList>
            <person name="Sas-Chen A."/>
            <person name="Thomas J.M."/>
            <person name="Matzov D."/>
            <person name="Taoka M."/>
            <person name="Nance K.D."/>
            <person name="Nir R."/>
            <person name="Bryson K.M."/>
            <person name="Shachar R."/>
            <person name="Liman G.L.S."/>
            <person name="Burkhart B.W."/>
            <person name="Gamage S.T."/>
            <person name="Nobe Y."/>
            <person name="Briney C.A."/>
            <person name="Levy M.J."/>
            <person name="Fuchs R.T."/>
            <person name="Robb G.B."/>
            <person name="Hartmann J."/>
            <person name="Sharma S."/>
            <person name="Lin Q."/>
            <person name="Florens L."/>
            <person name="Washburn M.P."/>
            <person name="Isobe T."/>
            <person name="Santangelo T.J."/>
            <person name="Shalev-Benami M."/>
            <person name="Meier J.L."/>
            <person name="Schwartz S."/>
        </authorList>
    </citation>
    <scope>STRUCTURE BY ELECTRON MICROSCOPY (2.55 ANGSTROMS) IN 70S RIBOSOME IN COMPLEX WITH ZN(2+)</scope>
    <scope>SUBUNIT</scope>
    <source>
        <strain>ATCC BAA-918 / TS559</strain>
    </source>
</reference>
<dbReference type="EMBL" id="AP006878">
    <property type="protein sequence ID" value="BAD85704.1"/>
    <property type="molecule type" value="Genomic_DNA"/>
</dbReference>
<dbReference type="RefSeq" id="WP_011250466.1">
    <property type="nucleotide sequence ID" value="NC_006624.1"/>
</dbReference>
<dbReference type="PDB" id="6SKF">
    <property type="method" value="EM"/>
    <property type="resolution" value="2.95 A"/>
    <property type="chains" value="Be=1-90"/>
</dbReference>
<dbReference type="PDB" id="6SKG">
    <property type="method" value="EM"/>
    <property type="resolution" value="2.65 A"/>
    <property type="chains" value="Be=1-90"/>
</dbReference>
<dbReference type="PDB" id="6TH6">
    <property type="method" value="EM"/>
    <property type="resolution" value="2.55 A"/>
    <property type="chains" value="Be=1-90"/>
</dbReference>
<dbReference type="PDBsum" id="6SKF"/>
<dbReference type="PDBsum" id="6SKG"/>
<dbReference type="PDBsum" id="6TH6"/>
<dbReference type="EMDB" id="EMD-10223"/>
<dbReference type="EMDB" id="EMD-10224"/>
<dbReference type="EMDB" id="EMD-10503"/>
<dbReference type="SMR" id="Q5JJF7"/>
<dbReference type="FunCoup" id="Q5JJF7">
    <property type="interactions" value="153"/>
</dbReference>
<dbReference type="STRING" id="69014.TK1515"/>
<dbReference type="EnsemblBacteria" id="BAD85704">
    <property type="protein sequence ID" value="BAD85704"/>
    <property type="gene ID" value="TK1515"/>
</dbReference>
<dbReference type="GeneID" id="78448043"/>
<dbReference type="KEGG" id="tko:TK1515"/>
<dbReference type="PATRIC" id="fig|69014.16.peg.1475"/>
<dbReference type="eggNOG" id="arCOG04168">
    <property type="taxonomic scope" value="Archaea"/>
</dbReference>
<dbReference type="HOGENOM" id="CLU_118652_2_0_2"/>
<dbReference type="InParanoid" id="Q5JJF7"/>
<dbReference type="OrthoDB" id="43096at2157"/>
<dbReference type="PhylomeDB" id="Q5JJF7"/>
<dbReference type="Proteomes" id="UP000000536">
    <property type="component" value="Chromosome"/>
</dbReference>
<dbReference type="GO" id="GO:1990904">
    <property type="term" value="C:ribonucleoprotein complex"/>
    <property type="evidence" value="ECO:0007669"/>
    <property type="project" value="UniProtKB-KW"/>
</dbReference>
<dbReference type="GO" id="GO:0005840">
    <property type="term" value="C:ribosome"/>
    <property type="evidence" value="ECO:0007669"/>
    <property type="project" value="UniProtKB-KW"/>
</dbReference>
<dbReference type="GO" id="GO:0046872">
    <property type="term" value="F:metal ion binding"/>
    <property type="evidence" value="ECO:0007669"/>
    <property type="project" value="UniProtKB-KW"/>
</dbReference>
<dbReference type="GO" id="GO:0003735">
    <property type="term" value="F:structural constituent of ribosome"/>
    <property type="evidence" value="ECO:0007669"/>
    <property type="project" value="InterPro"/>
</dbReference>
<dbReference type="GO" id="GO:0006412">
    <property type="term" value="P:translation"/>
    <property type="evidence" value="ECO:0007669"/>
    <property type="project" value="UniProtKB-UniRule"/>
</dbReference>
<dbReference type="Gene3D" id="6.20.340.10">
    <property type="match status" value="1"/>
</dbReference>
<dbReference type="HAMAP" id="MF_00349">
    <property type="entry name" value="Ribosomal_eL34"/>
    <property type="match status" value="1"/>
</dbReference>
<dbReference type="InterPro" id="IPR008195">
    <property type="entry name" value="Ribosomal_eL34"/>
</dbReference>
<dbReference type="InterPro" id="IPR038562">
    <property type="entry name" value="Ribosomal_eL34_C_sf"/>
</dbReference>
<dbReference type="InterPro" id="IPR018065">
    <property type="entry name" value="Ribosomal_eL34_CS"/>
</dbReference>
<dbReference type="InterPro" id="IPR047868">
    <property type="entry name" value="Ribosomal_L34e_arc-type"/>
</dbReference>
<dbReference type="NCBIfam" id="NF003143">
    <property type="entry name" value="PRK04059.1"/>
    <property type="match status" value="1"/>
</dbReference>
<dbReference type="PANTHER" id="PTHR10759">
    <property type="entry name" value="60S RIBOSOMAL PROTEIN L34"/>
    <property type="match status" value="1"/>
</dbReference>
<dbReference type="Pfam" id="PF01199">
    <property type="entry name" value="Ribosomal_L34e"/>
    <property type="match status" value="1"/>
</dbReference>
<dbReference type="PRINTS" id="PR01250">
    <property type="entry name" value="RIBOSOMALL34"/>
</dbReference>
<dbReference type="PROSITE" id="PS01145">
    <property type="entry name" value="RIBOSOMAL_L34E"/>
    <property type="match status" value="1"/>
</dbReference>